<protein>
    <recommendedName>
        <fullName>Transcription factor Maf</fullName>
    </recommendedName>
    <alternativeName>
        <fullName>Proto-oncogene c-Maf</fullName>
    </alternativeName>
    <alternativeName>
        <fullName>V-maf musculoaponeurotic fibrosarcoma oncogene homolog</fullName>
    </alternativeName>
</protein>
<accession>A7Z017</accession>
<comment type="function">
    <text evidence="1">Acts as a transcriptional activator or repressor. When overexpressed, represses anti-oxidant response element (ARE)-mediated transcription. Involved either as an oncogene or as a tumor suppressor, depending on the cell context. Binds to the ARE sites of detoxifying enzyme gene promoters. Involved in embryonic lens fiber cell development. Recruits the transcriptional coactivators CREBBP and/or EP300 to crystallin promoters leading to up-regulation of crystallin gene during lens fiber cell differentiation. Activates the expression of IL4 in T-helper 2 (Th2) cells. Increases T-cell susceptibility to apoptosis by interacting with MYB and decreasing BCL2 expression. Together with PAX6, transactivates strongly the glucagon gene promoter through the G1 element. Activates transcription of the CD13 proximal promoter in endothelial cells. Represses transcription of the CD13 promoter in early stages of myelopoiesis by affecting the ETS1 and MYB cooperative interaction. Involved in the initial chondrocyte terminal differentiation and the disappearance of hypertrophic chondrocytes during endochondral bone development. Binds to the sequence 5'-[GT]G[GC]N[GT]NCTCAGNN-3' in the L7 promoter. Binds to the T-MARE (Maf response element) sites of lens-specific alpha- and beta-crystallin gene promoters. Binds element G1 on the glucagon promoter. Binds an AT-rich region adjacent to the TGC motif (atypical Maf response element) in the CD13 proximal promoter in endothelial cells. It may interact with additional basic-zipper proteins that determine a subtype of Maf-responsive element binding (By similarity).</text>
</comment>
<comment type="subunit">
    <text evidence="1">Homodimer or heterodimer with other bHLH-Zip transcription factors. Binds DNA as a homodimer or as a heterodimer. Heterotetramer of two MAF and two USF2. Interacts with PAX6; the interaction is direct. Interacts with MYB; interaction takes place weakly in normal T-cells and increases in T-cells following stimulation through the TCR engagement. Interacts with MYB; the ternary complex formed with MYB and the CD13 promoter is regulated in response to differentiating signals. Interacts with USF2; the interaction inhibits its DNA-binding activity on the L7 promoter. Interacts with CREBBP, EP300 and ETS1 (By similarity).</text>
</comment>
<comment type="subcellular location">
    <subcellularLocation>
        <location evidence="3">Nucleus</location>
    </subcellularLocation>
</comment>
<comment type="PTM">
    <text evidence="1">Ubiquitinated, leading to its degradation by the proteasome. Ubiquitination is triggered by glucocorticoids (By similarity).</text>
</comment>
<comment type="PTM">
    <text evidence="1 5">Phosphorylated by GSK3 and MAPK13 on serine and threonine residues (Probable). The phosphorylation status can serve to either stimulate or inhibit transcription (By similarity).</text>
</comment>
<comment type="similarity">
    <text evidence="5">Belongs to the bZIP family. Maf subfamily.</text>
</comment>
<gene>
    <name type="primary">MAF</name>
</gene>
<dbReference type="EMBL" id="BC153214">
    <property type="protein sequence ID" value="AAI53215.1"/>
    <property type="molecule type" value="mRNA"/>
</dbReference>
<dbReference type="RefSeq" id="NP_001099107.1">
    <property type="nucleotide sequence ID" value="NM_001105637.2"/>
</dbReference>
<dbReference type="SMR" id="A7Z017"/>
<dbReference type="FunCoup" id="A7Z017">
    <property type="interactions" value="59"/>
</dbReference>
<dbReference type="STRING" id="9913.ENSBTAP00000053555"/>
<dbReference type="GeneID" id="782481"/>
<dbReference type="KEGG" id="bta:782481"/>
<dbReference type="CTD" id="4094"/>
<dbReference type="InParanoid" id="A7Z017"/>
<dbReference type="OrthoDB" id="5974330at2759"/>
<dbReference type="Proteomes" id="UP000009136">
    <property type="component" value="Unplaced"/>
</dbReference>
<dbReference type="GO" id="GO:0005634">
    <property type="term" value="C:nucleus"/>
    <property type="evidence" value="ECO:0000318"/>
    <property type="project" value="GO_Central"/>
</dbReference>
<dbReference type="GO" id="GO:0000981">
    <property type="term" value="F:DNA-binding transcription factor activity, RNA polymerase II-specific"/>
    <property type="evidence" value="ECO:0000318"/>
    <property type="project" value="GO_Central"/>
</dbReference>
<dbReference type="GO" id="GO:0000978">
    <property type="term" value="F:RNA polymerase II cis-regulatory region sequence-specific DNA binding"/>
    <property type="evidence" value="ECO:0000318"/>
    <property type="project" value="GO_Central"/>
</dbReference>
<dbReference type="GO" id="GO:0070306">
    <property type="term" value="P:lens fiber cell differentiation"/>
    <property type="evidence" value="ECO:0000318"/>
    <property type="project" value="GO_Central"/>
</dbReference>
<dbReference type="GO" id="GO:0006357">
    <property type="term" value="P:regulation of transcription by RNA polymerase II"/>
    <property type="evidence" value="ECO:0000318"/>
    <property type="project" value="GO_Central"/>
</dbReference>
<dbReference type="CDD" id="cd14718">
    <property type="entry name" value="bZIP_Maf_large"/>
    <property type="match status" value="1"/>
</dbReference>
<dbReference type="FunFam" id="1.20.5.170:FF:000016">
    <property type="entry name" value="MAF bZIP transcription factor"/>
    <property type="match status" value="1"/>
</dbReference>
<dbReference type="Gene3D" id="1.20.5.170">
    <property type="match status" value="1"/>
</dbReference>
<dbReference type="InterPro" id="IPR004827">
    <property type="entry name" value="bZIP"/>
</dbReference>
<dbReference type="InterPro" id="IPR004826">
    <property type="entry name" value="bZIP_Maf"/>
</dbReference>
<dbReference type="InterPro" id="IPR046347">
    <property type="entry name" value="bZIP_sf"/>
</dbReference>
<dbReference type="InterPro" id="IPR013592">
    <property type="entry name" value="Maf_TF_N"/>
</dbReference>
<dbReference type="InterPro" id="IPR008917">
    <property type="entry name" value="TF_DNA-bd_sf"/>
</dbReference>
<dbReference type="InterPro" id="IPR024874">
    <property type="entry name" value="Transcription_factor_Maf_fam"/>
</dbReference>
<dbReference type="PANTHER" id="PTHR10129">
    <property type="entry name" value="TRANSCRIPTION FACTOR MAF"/>
    <property type="match status" value="1"/>
</dbReference>
<dbReference type="PANTHER" id="PTHR10129:SF9">
    <property type="entry name" value="TRANSCRIPTION FACTOR MAF"/>
    <property type="match status" value="1"/>
</dbReference>
<dbReference type="Pfam" id="PF03131">
    <property type="entry name" value="bZIP_Maf"/>
    <property type="match status" value="1"/>
</dbReference>
<dbReference type="Pfam" id="PF08383">
    <property type="entry name" value="Maf_N"/>
    <property type="match status" value="1"/>
</dbReference>
<dbReference type="SMART" id="SM00338">
    <property type="entry name" value="BRLZ"/>
    <property type="match status" value="1"/>
</dbReference>
<dbReference type="SUPFAM" id="SSF47454">
    <property type="entry name" value="A DNA-binding domain in eukaryotic transcription factors"/>
    <property type="match status" value="1"/>
</dbReference>
<dbReference type="SUPFAM" id="SSF57959">
    <property type="entry name" value="Leucine zipper domain"/>
    <property type="match status" value="1"/>
</dbReference>
<dbReference type="PROSITE" id="PS50217">
    <property type="entry name" value="BZIP"/>
    <property type="match status" value="1"/>
</dbReference>
<feature type="chain" id="PRO_0000364081" description="Transcription factor Maf">
    <location>
        <begin position="1"/>
        <end position="377"/>
    </location>
</feature>
<feature type="domain" description="bZIP" evidence="3">
    <location>
        <begin position="292"/>
        <end position="355"/>
    </location>
</feature>
<feature type="region of interest" description="Disordered" evidence="4">
    <location>
        <begin position="57"/>
        <end position="84"/>
    </location>
</feature>
<feature type="region of interest" description="Represses ARE-mediated transcription" evidence="1">
    <location>
        <begin position="126"/>
        <end position="377"/>
    </location>
</feature>
<feature type="region of interest" description="Disordered" evidence="4">
    <location>
        <begin position="175"/>
        <end position="244"/>
    </location>
</feature>
<feature type="region of interest" description="Basic motif" evidence="3">
    <location>
        <begin position="292"/>
        <end position="317"/>
    </location>
</feature>
<feature type="region of interest" description="Leucine-zipper" evidence="3">
    <location>
        <begin position="320"/>
        <end position="341"/>
    </location>
</feature>
<feature type="region of interest" description="Disordered" evidence="4">
    <location>
        <begin position="358"/>
        <end position="377"/>
    </location>
</feature>
<feature type="compositionally biased region" description="Low complexity" evidence="4">
    <location>
        <begin position="72"/>
        <end position="82"/>
    </location>
</feature>
<feature type="compositionally biased region" description="Basic residues" evidence="4">
    <location>
        <begin position="180"/>
        <end position="197"/>
    </location>
</feature>
<feature type="compositionally biased region" description="Low complexity" evidence="4">
    <location>
        <begin position="198"/>
        <end position="212"/>
    </location>
</feature>
<feature type="compositionally biased region" description="Gly residues" evidence="4">
    <location>
        <begin position="213"/>
        <end position="244"/>
    </location>
</feature>
<feature type="compositionally biased region" description="Polar residues" evidence="4">
    <location>
        <begin position="363"/>
        <end position="377"/>
    </location>
</feature>
<feature type="cross-link" description="Glycyl lysine isopeptide (Lys-Gly) (interchain with G-Cter in SUMO2)" evidence="2">
    <location>
        <position position="29"/>
    </location>
</feature>
<feature type="cross-link" description="Glycyl lysine isopeptide (Lys-Gly) (interchain with G-Cter in SUMO2)" evidence="2">
    <location>
        <position position="33"/>
    </location>
</feature>
<feature type="cross-link" description="Glycyl lysine isopeptide (Lys-Gly) (interchain with G-Cter in SUMO2)" evidence="2">
    <location>
        <position position="335"/>
    </location>
</feature>
<evidence type="ECO:0000250" key="1"/>
<evidence type="ECO:0000250" key="2">
    <source>
        <dbReference type="UniProtKB" id="O75444"/>
    </source>
</evidence>
<evidence type="ECO:0000255" key="3">
    <source>
        <dbReference type="PROSITE-ProRule" id="PRU00978"/>
    </source>
</evidence>
<evidence type="ECO:0000256" key="4">
    <source>
        <dbReference type="SAM" id="MobiDB-lite"/>
    </source>
</evidence>
<evidence type="ECO:0000305" key="5"/>
<proteinExistence type="evidence at transcript level"/>
<name>MAF_BOVIN</name>
<reference key="1">
    <citation type="submission" date="2007-09" db="EMBL/GenBank/DDBJ databases">
        <authorList>
            <consortium name="NIH - Mammalian Gene Collection (MGC) project"/>
        </authorList>
    </citation>
    <scope>NUCLEOTIDE SEQUENCE [LARGE SCALE MRNA]</scope>
    <source>
        <strain>Hereford</strain>
        <tissue>Hypothalamus</tissue>
    </source>
</reference>
<organism>
    <name type="scientific">Bos taurus</name>
    <name type="common">Bovine</name>
    <dbReference type="NCBI Taxonomy" id="9913"/>
    <lineage>
        <taxon>Eukaryota</taxon>
        <taxon>Metazoa</taxon>
        <taxon>Chordata</taxon>
        <taxon>Craniata</taxon>
        <taxon>Vertebrata</taxon>
        <taxon>Euteleostomi</taxon>
        <taxon>Mammalia</taxon>
        <taxon>Eutheria</taxon>
        <taxon>Laurasiatheria</taxon>
        <taxon>Artiodactyla</taxon>
        <taxon>Ruminantia</taxon>
        <taxon>Pecora</taxon>
        <taxon>Bovidae</taxon>
        <taxon>Bovinae</taxon>
        <taxon>Bos</taxon>
    </lineage>
</organism>
<keyword id="KW-0010">Activator</keyword>
<keyword id="KW-0238">DNA-binding</keyword>
<keyword id="KW-1017">Isopeptide bond</keyword>
<keyword id="KW-0539">Nucleus</keyword>
<keyword id="KW-0656">Proto-oncogene</keyword>
<keyword id="KW-1185">Reference proteome</keyword>
<keyword id="KW-0678">Repressor</keyword>
<keyword id="KW-0804">Transcription</keyword>
<keyword id="KW-0805">Transcription regulation</keyword>
<keyword id="KW-0043">Tumor suppressor</keyword>
<keyword id="KW-0832">Ubl conjugation</keyword>
<sequence>MASELAMSNSDLPTSPLAMEYVNDFDLMKFEVKKEPVETDRIISQCGRLIAGGSLSSTPMSTPCSSVPPSPSFSAPSPGSGSEQKAHLEDYYWMTGYPQQLNPEALGFSPEDAVEALISNSHQLQGGFDGYARGAQQLASAAGAGAGASLGGSGEEMGPAAAVVSAVIAAAAAQSGAAPHYHHHHHHHHAAGHHHHPTAGAPGAAGSASASAGGAGGSGGGSGGPASAGGGGGGGGGGGGGAAGAGGALHPHHAAAGGLHFDDRFSDEQLVTMSVRELNRQLRGVSKEEVIRLKQKRRTLKNRGYAQSCRFKRVQQRHVLESEKNQLLQQVDHLKQEISRLVRERDAYKEKYEKLVSSGFRENGSSSDNPSSPEFFM</sequence>